<keyword id="KW-1015">Disulfide bond</keyword>
<keyword id="KW-0325">Glycoprotein</keyword>
<keyword id="KW-0472">Membrane</keyword>
<keyword id="KW-0675">Receptor</keyword>
<keyword id="KW-1185">Reference proteome</keyword>
<keyword id="KW-0677">Repeat</keyword>
<keyword id="KW-0732">Signal</keyword>
<keyword id="KW-0812">Transmembrane</keyword>
<keyword id="KW-1133">Transmembrane helix</keyword>
<name>I13R1_MOUSE</name>
<comment type="function">
    <text evidence="1">Binds with low affinity to interleukin-13 (IL13). Together with IL4RA can form a functional receptor for IL13. Also serves as an alternate accessory protein to the common cytokine receptor gamma chain for interleukin-4 (IL4) signaling, but cannot replace the function of IL2RG in allowing enhanced interleukin-2 (IL2) binding activity (By similarity).</text>
</comment>
<comment type="subunit">
    <text evidence="1">Interleukin-13 receptor is a complex of IL4R, IL13RA1, and possibly other components. Interacts with TRAF3IP1 (By similarity). Interacts with IL4 (By similarity).</text>
</comment>
<comment type="subcellular location">
    <subcellularLocation>
        <location>Membrane</location>
        <topology>Single-pass type I membrane protein</topology>
    </subcellularLocation>
</comment>
<comment type="tissue specificity">
    <text>Spleen, liver, thymus, heart, lung, kidney, testis, stomach, brain, skin, and colon; but not skeletal muscle.</text>
</comment>
<comment type="domain">
    <text>The WSXWS motif appears to be necessary for proper protein folding and thereby efficient intracellular transport and cell-surface receptor binding.</text>
</comment>
<comment type="domain">
    <text>The box 1 motif is required for JAK interaction and/or activation.</text>
</comment>
<comment type="similarity">
    <text evidence="4">Belongs to the type I cytokine receptor family. Type 5 subfamily.</text>
</comment>
<evidence type="ECO:0000250" key="1"/>
<evidence type="ECO:0000255" key="2"/>
<evidence type="ECO:0000255" key="3">
    <source>
        <dbReference type="PROSITE-ProRule" id="PRU00316"/>
    </source>
</evidence>
<evidence type="ECO:0000305" key="4"/>
<gene>
    <name type="primary">Il13ra1</name>
    <name type="synonym">Il13r</name>
    <name type="synonym">Il13ra</name>
</gene>
<accession>O09030</accession>
<accession>Q7TT27</accession>
<sequence>MARPALLGELLVLLLWTATVGQVAAATEVQPPVTNLSVSVENLCTIIWTWSPPEGASPNCTLRYFSHFDDQQDKKIAPETHRKEELPLDEKICLQVGSQCSANESEKPSPLVKKCISPPEGDPESAVTELKCIWHNLSYMKCSWLPGRNTSPDTHYTLYYWYSSLEKSRQCENIYREGQHIACSFKLTKVEPSFEHQNVQIMVKDNAGKIRPSCKIVSLTSYVKPDPPHIKHLLLKNGALLVQWKNPQNFRSRCLTYEVEVNNTQTDRHNILEVEEDKCQNSESDRNMEGTSCFQLPGVLADAVYTVRVRVKTNKLCFDDNKLWSDWSEAQSIGKEQNSTFYTTMLLTIPVFVAVAVIILLFYLKRLKIIIFPPIPDPGKIFKEMFGDQNDDTLHWKKYDIYEKQSKEETDSVVLIENLKKAAP</sequence>
<organism>
    <name type="scientific">Mus musculus</name>
    <name type="common">Mouse</name>
    <dbReference type="NCBI Taxonomy" id="10090"/>
    <lineage>
        <taxon>Eukaryota</taxon>
        <taxon>Metazoa</taxon>
        <taxon>Chordata</taxon>
        <taxon>Craniata</taxon>
        <taxon>Vertebrata</taxon>
        <taxon>Euteleostomi</taxon>
        <taxon>Mammalia</taxon>
        <taxon>Eutheria</taxon>
        <taxon>Euarchontoglires</taxon>
        <taxon>Glires</taxon>
        <taxon>Rodentia</taxon>
        <taxon>Myomorpha</taxon>
        <taxon>Muroidea</taxon>
        <taxon>Muridae</taxon>
        <taxon>Murinae</taxon>
        <taxon>Mus</taxon>
        <taxon>Mus</taxon>
    </lineage>
</organism>
<reference key="1">
    <citation type="journal article" date="1996" name="Proc. Natl. Acad. Sci. U.S.A.">
        <title>Cloning and characterization of a binding subunit of the interleukin 13 receptor that is also a component of the interleukin 4 receptor.</title>
        <authorList>
            <person name="Hilton D.J."/>
            <person name="Zhang J.-G."/>
            <person name="Metcalf D."/>
            <person name="Alexander W.S."/>
            <person name="Nicola N.A."/>
            <person name="Willson T.A."/>
        </authorList>
    </citation>
    <scope>NUCLEOTIDE SEQUENCE [MRNA]</scope>
</reference>
<reference key="2">
    <citation type="journal article" date="2004" name="Genome Res.">
        <title>The status, quality, and expansion of the NIH full-length cDNA project: the Mammalian Gene Collection (MGC).</title>
        <authorList>
            <consortium name="The MGC Project Team"/>
        </authorList>
    </citation>
    <scope>NUCLEOTIDE SEQUENCE [LARGE SCALE MRNA]</scope>
    <source>
        <strain>FVB/N</strain>
        <tissue>Brain</tissue>
        <tissue>Colon</tissue>
    </source>
</reference>
<feature type="signal peptide" evidence="2">
    <location>
        <begin position="1"/>
        <end position="25"/>
    </location>
</feature>
<feature type="chain" id="PRO_0000010940" description="Interleukin-13 receptor subunit alpha-1">
    <location>
        <begin position="26"/>
        <end position="424"/>
    </location>
</feature>
<feature type="topological domain" description="Extracellular" evidence="2">
    <location>
        <begin position="26"/>
        <end position="340"/>
    </location>
</feature>
<feature type="transmembrane region" description="Helical" evidence="2">
    <location>
        <begin position="341"/>
        <end position="364"/>
    </location>
</feature>
<feature type="topological domain" description="Cytoplasmic" evidence="2">
    <location>
        <begin position="365"/>
        <end position="424"/>
    </location>
</feature>
<feature type="domain" description="Fibronectin type-III 1" evidence="3">
    <location>
        <begin position="32"/>
        <end position="121"/>
    </location>
</feature>
<feature type="domain" description="Fibronectin type-III 2" evidence="3">
    <location>
        <begin position="224"/>
        <end position="336"/>
    </location>
</feature>
<feature type="short sequence motif" description="WSXWS motif">
    <location>
        <begin position="324"/>
        <end position="328"/>
    </location>
</feature>
<feature type="short sequence motif" description="Box 1 motif">
    <location>
        <begin position="371"/>
        <end position="379"/>
    </location>
</feature>
<feature type="glycosylation site" description="N-linked (GlcNAc...) asparagine" evidence="2">
    <location>
        <position position="35"/>
    </location>
</feature>
<feature type="glycosylation site" description="N-linked (GlcNAc...) asparagine" evidence="2">
    <location>
        <position position="59"/>
    </location>
</feature>
<feature type="glycosylation site" description="N-linked (GlcNAc...) asparagine" evidence="2">
    <location>
        <position position="103"/>
    </location>
</feature>
<feature type="glycosylation site" description="N-linked (GlcNAc...) asparagine" evidence="2">
    <location>
        <position position="136"/>
    </location>
</feature>
<feature type="glycosylation site" description="N-linked (GlcNAc...) asparagine" evidence="2">
    <location>
        <position position="262"/>
    </location>
</feature>
<feature type="glycosylation site" description="N-linked (GlcNAc...) asparagine" evidence="2">
    <location>
        <position position="338"/>
    </location>
</feature>
<feature type="disulfide bond" evidence="2">
    <location>
        <begin position="44"/>
        <end position="93"/>
    </location>
</feature>
<feature type="disulfide bond" evidence="1">
    <location>
        <begin position="132"/>
        <end position="142"/>
    </location>
</feature>
<feature type="disulfide bond" evidence="1">
    <location>
        <begin position="171"/>
        <end position="183"/>
    </location>
</feature>
<dbReference type="EMBL" id="S80963">
    <property type="protein sequence ID" value="AAB50695.1"/>
    <property type="molecule type" value="mRNA"/>
</dbReference>
<dbReference type="EMBL" id="BC052425">
    <property type="protein sequence ID" value="AAH52425.2"/>
    <property type="molecule type" value="mRNA"/>
</dbReference>
<dbReference type="EMBL" id="BC059939">
    <property type="protein sequence ID" value="AAH59939.1"/>
    <property type="molecule type" value="mRNA"/>
</dbReference>
<dbReference type="CCDS" id="CCDS30057.1"/>
<dbReference type="RefSeq" id="NP_598751.3">
    <property type="nucleotide sequence ID" value="NM_133990.5"/>
</dbReference>
<dbReference type="SMR" id="O09030"/>
<dbReference type="BioGRID" id="200614">
    <property type="interactions" value="1"/>
</dbReference>
<dbReference type="DIP" id="DIP-1167N"/>
<dbReference type="FunCoup" id="O09030">
    <property type="interactions" value="388"/>
</dbReference>
<dbReference type="STRING" id="10090.ENSMUSP00000033418"/>
<dbReference type="GlyCosmos" id="O09030">
    <property type="glycosylation" value="6 sites, No reported glycans"/>
</dbReference>
<dbReference type="GlyGen" id="O09030">
    <property type="glycosylation" value="6 sites, 1 N-linked glycan (1 site)"/>
</dbReference>
<dbReference type="iPTMnet" id="O09030"/>
<dbReference type="PhosphoSitePlus" id="O09030"/>
<dbReference type="PaxDb" id="10090-ENSMUSP00000033418"/>
<dbReference type="ProteomicsDB" id="267074"/>
<dbReference type="Antibodypedia" id="385">
    <property type="antibodies" value="598 antibodies from 38 providers"/>
</dbReference>
<dbReference type="DNASU" id="16164"/>
<dbReference type="Ensembl" id="ENSMUST00000033418.8">
    <property type="protein sequence ID" value="ENSMUSP00000033418.8"/>
    <property type="gene ID" value="ENSMUSG00000017057.10"/>
</dbReference>
<dbReference type="GeneID" id="16164"/>
<dbReference type="KEGG" id="mmu:16164"/>
<dbReference type="UCSC" id="uc009sxj.1">
    <property type="organism name" value="mouse"/>
</dbReference>
<dbReference type="AGR" id="MGI:105052"/>
<dbReference type="CTD" id="3597"/>
<dbReference type="MGI" id="MGI:105052">
    <property type="gene designation" value="Il13ra1"/>
</dbReference>
<dbReference type="VEuPathDB" id="HostDB:ENSMUSG00000017057"/>
<dbReference type="eggNOG" id="ENOG502RYXH">
    <property type="taxonomic scope" value="Eukaryota"/>
</dbReference>
<dbReference type="GeneTree" id="ENSGT00940000160896"/>
<dbReference type="HOGENOM" id="CLU_039945_1_0_1"/>
<dbReference type="InParanoid" id="O09030"/>
<dbReference type="OMA" id="RPVCASK"/>
<dbReference type="OrthoDB" id="9940625at2759"/>
<dbReference type="PhylomeDB" id="O09030"/>
<dbReference type="TreeFam" id="TF331549"/>
<dbReference type="Reactome" id="R-MMU-6785807">
    <property type="pathway name" value="Interleukin-4 and Interleukin-13 signaling"/>
</dbReference>
<dbReference type="BioGRID-ORCS" id="16164">
    <property type="hits" value="5 hits in 77 CRISPR screens"/>
</dbReference>
<dbReference type="ChiTaRS" id="Il13ra1">
    <property type="organism name" value="mouse"/>
</dbReference>
<dbReference type="PRO" id="PR:O09030"/>
<dbReference type="Proteomes" id="UP000000589">
    <property type="component" value="Chromosome X"/>
</dbReference>
<dbReference type="RNAct" id="O09030">
    <property type="molecule type" value="protein"/>
</dbReference>
<dbReference type="Bgee" id="ENSMUSG00000017057">
    <property type="expression patterns" value="Expressed in jejunum and 217 other cell types or tissues"/>
</dbReference>
<dbReference type="GO" id="GO:0016020">
    <property type="term" value="C:membrane"/>
    <property type="evidence" value="ECO:0007669"/>
    <property type="project" value="UniProtKB-SubCell"/>
</dbReference>
<dbReference type="GO" id="GO:0004896">
    <property type="term" value="F:cytokine receptor activity"/>
    <property type="evidence" value="ECO:0007669"/>
    <property type="project" value="InterPro"/>
</dbReference>
<dbReference type="CDD" id="cd00063">
    <property type="entry name" value="FN3"/>
    <property type="match status" value="1"/>
</dbReference>
<dbReference type="FunFam" id="2.60.40.10:FF:000717">
    <property type="entry name" value="interleukin-13 receptor subunit alpha-1 isoform X1"/>
    <property type="match status" value="1"/>
</dbReference>
<dbReference type="FunFam" id="2.60.40.10:FF:000861">
    <property type="entry name" value="interleukin-13 receptor subunit alpha-1 isoform X1"/>
    <property type="match status" value="1"/>
</dbReference>
<dbReference type="FunFam" id="2.60.40.10:FF:000851">
    <property type="entry name" value="interleukin-13 receptor subunit alpha-1 isoform X2"/>
    <property type="match status" value="1"/>
</dbReference>
<dbReference type="Gene3D" id="2.60.40.10">
    <property type="entry name" value="Immunoglobulins"/>
    <property type="match status" value="3"/>
</dbReference>
<dbReference type="InterPro" id="IPR003961">
    <property type="entry name" value="FN3_dom"/>
</dbReference>
<dbReference type="InterPro" id="IPR036116">
    <property type="entry name" value="FN3_sf"/>
</dbReference>
<dbReference type="InterPro" id="IPR013783">
    <property type="entry name" value="Ig-like_fold"/>
</dbReference>
<dbReference type="InterPro" id="IPR040566">
    <property type="entry name" value="Il13Ra_Ig"/>
</dbReference>
<dbReference type="InterPro" id="IPR003532">
    <property type="entry name" value="Short_hematopoietin_rcpt_2_CS"/>
</dbReference>
<dbReference type="InterPro" id="IPR015321">
    <property type="entry name" value="TypeI_recpt_CBD"/>
</dbReference>
<dbReference type="PANTHER" id="PTHR23037">
    <property type="entry name" value="CYTOKINE RECEPTOR"/>
    <property type="match status" value="1"/>
</dbReference>
<dbReference type="PANTHER" id="PTHR23037:SF46">
    <property type="entry name" value="INTERLEUKIN 5 RECEPTOR SUBUNIT ALPHA"/>
    <property type="match status" value="1"/>
</dbReference>
<dbReference type="Pfam" id="PF18001">
    <property type="entry name" value="Il13Ra_Ig"/>
    <property type="match status" value="1"/>
</dbReference>
<dbReference type="Pfam" id="PF09240">
    <property type="entry name" value="IL6Ra-bind"/>
    <property type="match status" value="1"/>
</dbReference>
<dbReference type="SUPFAM" id="SSF49265">
    <property type="entry name" value="Fibronectin type III"/>
    <property type="match status" value="2"/>
</dbReference>
<dbReference type="PROSITE" id="PS50853">
    <property type="entry name" value="FN3"/>
    <property type="match status" value="2"/>
</dbReference>
<dbReference type="PROSITE" id="PS01356">
    <property type="entry name" value="HEMATOPO_REC_S_F2"/>
    <property type="match status" value="1"/>
</dbReference>
<proteinExistence type="evidence at transcript level"/>
<protein>
    <recommendedName>
        <fullName>Interleukin-13 receptor subunit alpha-1</fullName>
        <shortName>IL-13 receptor subunit alpha-1</shortName>
        <shortName>IL-13R subunit alpha-1</shortName>
        <shortName>IL-13R-alpha-1</shortName>
        <shortName>IL-13RA1</shortName>
    </recommendedName>
    <alternativeName>
        <fullName>Interleukin-13-binding protein</fullName>
    </alternativeName>
    <alternativeName>
        <fullName>Novel cytokine receptor 4</fullName>
        <shortName>NR4</shortName>
    </alternativeName>
    <cdAntigenName>CD213a1</cdAntigenName>
</protein>